<proteinExistence type="inferred from homology"/>
<protein>
    <recommendedName>
        <fullName evidence="1">GTP cyclohydrolase-2</fullName>
        <ecNumber evidence="1">3.5.4.25</ecNumber>
    </recommendedName>
    <alternativeName>
        <fullName evidence="1">GTP cyclohydrolase II</fullName>
    </alternativeName>
</protein>
<dbReference type="EC" id="3.5.4.25" evidence="1"/>
<dbReference type="EMBL" id="CP001277">
    <property type="protein sequence ID" value="ACQ66891.1"/>
    <property type="molecule type" value="Genomic_DNA"/>
</dbReference>
<dbReference type="RefSeq" id="WP_012737856.1">
    <property type="nucleotide sequence ID" value="NC_012751.1"/>
</dbReference>
<dbReference type="SMR" id="C4K8Q4"/>
<dbReference type="STRING" id="572265.HDEF_0118"/>
<dbReference type="GeneID" id="66260055"/>
<dbReference type="KEGG" id="hde:HDEF_0118"/>
<dbReference type="eggNOG" id="COG0807">
    <property type="taxonomic scope" value="Bacteria"/>
</dbReference>
<dbReference type="HOGENOM" id="CLU_020273_2_1_6"/>
<dbReference type="UniPathway" id="UPA00275">
    <property type="reaction ID" value="UER00400"/>
</dbReference>
<dbReference type="Proteomes" id="UP000002334">
    <property type="component" value="Chromosome"/>
</dbReference>
<dbReference type="GO" id="GO:0005829">
    <property type="term" value="C:cytosol"/>
    <property type="evidence" value="ECO:0007669"/>
    <property type="project" value="TreeGrafter"/>
</dbReference>
<dbReference type="GO" id="GO:0005525">
    <property type="term" value="F:GTP binding"/>
    <property type="evidence" value="ECO:0007669"/>
    <property type="project" value="UniProtKB-KW"/>
</dbReference>
<dbReference type="GO" id="GO:0003935">
    <property type="term" value="F:GTP cyclohydrolase II activity"/>
    <property type="evidence" value="ECO:0007669"/>
    <property type="project" value="UniProtKB-UniRule"/>
</dbReference>
<dbReference type="GO" id="GO:0008270">
    <property type="term" value="F:zinc ion binding"/>
    <property type="evidence" value="ECO:0007669"/>
    <property type="project" value="UniProtKB-UniRule"/>
</dbReference>
<dbReference type="GO" id="GO:0009231">
    <property type="term" value="P:riboflavin biosynthetic process"/>
    <property type="evidence" value="ECO:0007669"/>
    <property type="project" value="UniProtKB-UniRule"/>
</dbReference>
<dbReference type="CDD" id="cd00641">
    <property type="entry name" value="GTP_cyclohydro2"/>
    <property type="match status" value="1"/>
</dbReference>
<dbReference type="FunFam" id="3.40.50.10990:FF:000002">
    <property type="entry name" value="GTP cyclohydrolase-2"/>
    <property type="match status" value="1"/>
</dbReference>
<dbReference type="Gene3D" id="3.40.50.10990">
    <property type="entry name" value="GTP cyclohydrolase II"/>
    <property type="match status" value="1"/>
</dbReference>
<dbReference type="HAMAP" id="MF_00179">
    <property type="entry name" value="RibA"/>
    <property type="match status" value="1"/>
</dbReference>
<dbReference type="InterPro" id="IPR032677">
    <property type="entry name" value="GTP_cyclohydro_II"/>
</dbReference>
<dbReference type="InterPro" id="IPR000926">
    <property type="entry name" value="RibA"/>
</dbReference>
<dbReference type="InterPro" id="IPR036144">
    <property type="entry name" value="RibA-like_sf"/>
</dbReference>
<dbReference type="NCBIfam" id="NF001591">
    <property type="entry name" value="PRK00393.1"/>
    <property type="match status" value="1"/>
</dbReference>
<dbReference type="NCBIfam" id="TIGR00505">
    <property type="entry name" value="ribA"/>
    <property type="match status" value="1"/>
</dbReference>
<dbReference type="PANTHER" id="PTHR21327:SF18">
    <property type="entry name" value="3,4-DIHYDROXY-2-BUTANONE 4-PHOSPHATE SYNTHASE"/>
    <property type="match status" value="1"/>
</dbReference>
<dbReference type="PANTHER" id="PTHR21327">
    <property type="entry name" value="GTP CYCLOHYDROLASE II-RELATED"/>
    <property type="match status" value="1"/>
</dbReference>
<dbReference type="Pfam" id="PF00925">
    <property type="entry name" value="GTP_cyclohydro2"/>
    <property type="match status" value="1"/>
</dbReference>
<dbReference type="SUPFAM" id="SSF142695">
    <property type="entry name" value="RibA-like"/>
    <property type="match status" value="1"/>
</dbReference>
<organism>
    <name type="scientific">Hamiltonella defensa subsp. Acyrthosiphon pisum (strain 5AT)</name>
    <dbReference type="NCBI Taxonomy" id="572265"/>
    <lineage>
        <taxon>Bacteria</taxon>
        <taxon>Pseudomonadati</taxon>
        <taxon>Pseudomonadota</taxon>
        <taxon>Gammaproteobacteria</taxon>
        <taxon>Enterobacterales</taxon>
        <taxon>Enterobacteriaceae</taxon>
        <taxon>aphid secondary symbionts</taxon>
        <taxon>Candidatus Hamiltonella</taxon>
    </lineage>
</organism>
<accession>C4K8Q4</accession>
<comment type="function">
    <text evidence="1">Catalyzes the conversion of GTP to 2,5-diamino-6-ribosylamino-4(3H)-pyrimidinone 5'-phosphate (DARP), formate and pyrophosphate.</text>
</comment>
<comment type="catalytic activity">
    <reaction evidence="1">
        <text>GTP + 4 H2O = 2,5-diamino-6-hydroxy-4-(5-phosphoribosylamino)-pyrimidine + formate + 2 phosphate + 3 H(+)</text>
        <dbReference type="Rhea" id="RHEA:23704"/>
        <dbReference type="ChEBI" id="CHEBI:15377"/>
        <dbReference type="ChEBI" id="CHEBI:15378"/>
        <dbReference type="ChEBI" id="CHEBI:15740"/>
        <dbReference type="ChEBI" id="CHEBI:37565"/>
        <dbReference type="ChEBI" id="CHEBI:43474"/>
        <dbReference type="ChEBI" id="CHEBI:58614"/>
        <dbReference type="EC" id="3.5.4.25"/>
    </reaction>
</comment>
<comment type="cofactor">
    <cofactor evidence="1">
        <name>Zn(2+)</name>
        <dbReference type="ChEBI" id="CHEBI:29105"/>
    </cofactor>
    <text evidence="1">Binds 1 zinc ion per subunit.</text>
</comment>
<comment type="pathway">
    <text evidence="1">Cofactor biosynthesis; riboflavin biosynthesis; 5-amino-6-(D-ribitylamino)uracil from GTP: step 1/4.</text>
</comment>
<comment type="subunit">
    <text evidence="1">Homodimer.</text>
</comment>
<comment type="similarity">
    <text evidence="1">Belongs to the GTP cyclohydrolase II family.</text>
</comment>
<keyword id="KW-0342">GTP-binding</keyword>
<keyword id="KW-0378">Hydrolase</keyword>
<keyword id="KW-0479">Metal-binding</keyword>
<keyword id="KW-0547">Nucleotide-binding</keyword>
<keyword id="KW-0686">Riboflavin biosynthesis</keyword>
<keyword id="KW-0862">Zinc</keyword>
<gene>
    <name evidence="1" type="primary">ribA</name>
    <name type="ordered locus">HDEF_0118</name>
</gene>
<sequence length="196" mass="22247">MNLKRISEAKLPTPWGDFLMIGFKELDKEQDHLALVLGDISTDAPVLSRIHSECLTGDALFSLRCDCGFQLKAAFKQICEEKRGLLIYHRQEGRNIGLLNKIRAYALQDQGADTVEANHQLGFATDERDFTVCANIYKILDVKAIRLLTNNPEKIKILKKEGINVVQRVSLIVESNPNNQDYLSTKKNKMGHFFKK</sequence>
<evidence type="ECO:0000255" key="1">
    <source>
        <dbReference type="HAMAP-Rule" id="MF_00179"/>
    </source>
</evidence>
<feature type="chain" id="PRO_1000203813" description="GTP cyclohydrolase-2">
    <location>
        <begin position="1"/>
        <end position="196"/>
    </location>
</feature>
<feature type="active site" description="Proton acceptor" evidence="1">
    <location>
        <position position="126"/>
    </location>
</feature>
<feature type="active site" description="Nucleophile" evidence="1">
    <location>
        <position position="128"/>
    </location>
</feature>
<feature type="binding site" evidence="1">
    <location>
        <begin position="49"/>
        <end position="53"/>
    </location>
    <ligand>
        <name>GTP</name>
        <dbReference type="ChEBI" id="CHEBI:37565"/>
    </ligand>
</feature>
<feature type="binding site" evidence="1">
    <location>
        <position position="54"/>
    </location>
    <ligand>
        <name>Zn(2+)</name>
        <dbReference type="ChEBI" id="CHEBI:29105"/>
        <note>catalytic</note>
    </ligand>
</feature>
<feature type="binding site" evidence="1">
    <location>
        <position position="65"/>
    </location>
    <ligand>
        <name>Zn(2+)</name>
        <dbReference type="ChEBI" id="CHEBI:29105"/>
        <note>catalytic</note>
    </ligand>
</feature>
<feature type="binding site" evidence="1">
    <location>
        <position position="67"/>
    </location>
    <ligand>
        <name>Zn(2+)</name>
        <dbReference type="ChEBI" id="CHEBI:29105"/>
        <note>catalytic</note>
    </ligand>
</feature>
<feature type="binding site" evidence="1">
    <location>
        <position position="70"/>
    </location>
    <ligand>
        <name>GTP</name>
        <dbReference type="ChEBI" id="CHEBI:37565"/>
    </ligand>
</feature>
<feature type="binding site" evidence="1">
    <location>
        <begin position="92"/>
        <end position="94"/>
    </location>
    <ligand>
        <name>GTP</name>
        <dbReference type="ChEBI" id="CHEBI:37565"/>
    </ligand>
</feature>
<feature type="binding site" evidence="1">
    <location>
        <position position="114"/>
    </location>
    <ligand>
        <name>GTP</name>
        <dbReference type="ChEBI" id="CHEBI:37565"/>
    </ligand>
</feature>
<feature type="binding site" evidence="1">
    <location>
        <position position="149"/>
    </location>
    <ligand>
        <name>GTP</name>
        <dbReference type="ChEBI" id="CHEBI:37565"/>
    </ligand>
</feature>
<feature type="binding site" evidence="1">
    <location>
        <position position="154"/>
    </location>
    <ligand>
        <name>GTP</name>
        <dbReference type="ChEBI" id="CHEBI:37565"/>
    </ligand>
</feature>
<name>RIBA_HAMD5</name>
<reference key="1">
    <citation type="journal article" date="2009" name="Proc. Natl. Acad. Sci. U.S.A.">
        <title>Hamiltonella defensa, genome evolution of protective bacterial endosymbiont from pathogenic ancestors.</title>
        <authorList>
            <person name="Degnan P.H."/>
            <person name="Yu Y."/>
            <person name="Sisneros N."/>
            <person name="Wing R.A."/>
            <person name="Moran N.A."/>
        </authorList>
    </citation>
    <scope>NUCLEOTIDE SEQUENCE [LARGE SCALE GENOMIC DNA]</scope>
    <source>
        <strain>5AT</strain>
    </source>
</reference>